<sequence>MEKKYYALAYYYITRVDNPHEEIALHKKFLEDLDVSCRIYISEQGINGQFSGYEPHAELYMQWLKERPNFSKIKFKIHHIKENIFPRITVKYRKELAALGCEVDLSKQAKHISPQEWHEKLQENRCLILDVRNNYEWKIGHFDNATLPDIQTFREFPEYAEKLAQECDPETTPVMMYCTGGIRCELYSPVLLEKGFKEVYQLDGGVIAYGQQVGTGKWLGKLFVFDDRLAIPIDESDPDVAPIAECCHCQTPSDAYYNCANTDCNALFLCCDECIHQHQGCCGEECSQSPRVRKFDSSRGNKPFRRAHLCEISENSESASCCLI</sequence>
<protein>
    <recommendedName>
        <fullName evidence="1">tRNA uridine(34) hydroxylase</fullName>
        <ecNumber evidence="1">1.14.-.-</ecNumber>
    </recommendedName>
    <alternativeName>
        <fullName evidence="1">tRNA hydroxylation protein O</fullName>
    </alternativeName>
</protein>
<accession>Q9Z7H1</accession>
<name>TRHO_CHLPN</name>
<evidence type="ECO:0000255" key="1">
    <source>
        <dbReference type="HAMAP-Rule" id="MF_00469"/>
    </source>
</evidence>
<proteinExistence type="inferred from homology"/>
<dbReference type="EC" id="1.14.-.-" evidence="1"/>
<dbReference type="EMBL" id="AE001363">
    <property type="protein sequence ID" value="AAD18873.1"/>
    <property type="molecule type" value="Genomic_DNA"/>
</dbReference>
<dbReference type="EMBL" id="AE002161">
    <property type="protein sequence ID" value="AAF37908.1"/>
    <property type="molecule type" value="Genomic_DNA"/>
</dbReference>
<dbReference type="EMBL" id="BA000008">
    <property type="protein sequence ID" value="BAA98941.1"/>
    <property type="molecule type" value="Genomic_DNA"/>
</dbReference>
<dbReference type="EMBL" id="AE009440">
    <property type="protein sequence ID" value="AAP98691.1"/>
    <property type="molecule type" value="Genomic_DNA"/>
</dbReference>
<dbReference type="PIR" id="C86582">
    <property type="entry name" value="C86582"/>
</dbReference>
<dbReference type="PIR" id="D72041">
    <property type="entry name" value="D72041"/>
</dbReference>
<dbReference type="RefSeq" id="NP_224930.1">
    <property type="nucleotide sequence ID" value="NC_000922.1"/>
</dbReference>
<dbReference type="RefSeq" id="WP_010883372.1">
    <property type="nucleotide sequence ID" value="NZ_LN847257.1"/>
</dbReference>
<dbReference type="SMR" id="Q9Z7H1"/>
<dbReference type="STRING" id="406984.CPK_ORF00140"/>
<dbReference type="GeneID" id="45050789"/>
<dbReference type="KEGG" id="cpa:CP_0012"/>
<dbReference type="KEGG" id="cpj:yceA"/>
<dbReference type="KEGG" id="cpn:CPn_0734"/>
<dbReference type="KEGG" id="cpt:CpB0762"/>
<dbReference type="PATRIC" id="fig|115713.3.peg.810"/>
<dbReference type="eggNOG" id="COG1054">
    <property type="taxonomic scope" value="Bacteria"/>
</dbReference>
<dbReference type="HOGENOM" id="CLU_038878_1_0_0"/>
<dbReference type="OrthoDB" id="9778326at2"/>
<dbReference type="Proteomes" id="UP000000583">
    <property type="component" value="Chromosome"/>
</dbReference>
<dbReference type="Proteomes" id="UP000000801">
    <property type="component" value="Chromosome"/>
</dbReference>
<dbReference type="GO" id="GO:0016705">
    <property type="term" value="F:oxidoreductase activity, acting on paired donors, with incorporation or reduction of molecular oxygen"/>
    <property type="evidence" value="ECO:0007669"/>
    <property type="project" value="UniProtKB-UniRule"/>
</dbReference>
<dbReference type="GO" id="GO:0006400">
    <property type="term" value="P:tRNA modification"/>
    <property type="evidence" value="ECO:0007669"/>
    <property type="project" value="UniProtKB-UniRule"/>
</dbReference>
<dbReference type="CDD" id="cd01518">
    <property type="entry name" value="RHOD_YceA"/>
    <property type="match status" value="1"/>
</dbReference>
<dbReference type="Gene3D" id="3.30.70.100">
    <property type="match status" value="1"/>
</dbReference>
<dbReference type="Gene3D" id="3.40.250.10">
    <property type="entry name" value="Rhodanese-like domain"/>
    <property type="match status" value="1"/>
</dbReference>
<dbReference type="HAMAP" id="MF_00469">
    <property type="entry name" value="TrhO"/>
    <property type="match status" value="1"/>
</dbReference>
<dbReference type="InterPro" id="IPR001763">
    <property type="entry name" value="Rhodanese-like_dom"/>
</dbReference>
<dbReference type="InterPro" id="IPR036873">
    <property type="entry name" value="Rhodanese-like_dom_sf"/>
</dbReference>
<dbReference type="InterPro" id="IPR022111">
    <property type="entry name" value="Rhodanese_C"/>
</dbReference>
<dbReference type="InterPro" id="IPR020936">
    <property type="entry name" value="TrhO"/>
</dbReference>
<dbReference type="InterPro" id="IPR040503">
    <property type="entry name" value="TRHO_N"/>
</dbReference>
<dbReference type="NCBIfam" id="NF001134">
    <property type="entry name" value="PRK00142.1-2"/>
    <property type="match status" value="1"/>
</dbReference>
<dbReference type="NCBIfam" id="NF001135">
    <property type="entry name" value="PRK00142.1-3"/>
    <property type="match status" value="1"/>
</dbReference>
<dbReference type="PANTHER" id="PTHR43268:SF3">
    <property type="entry name" value="RHODANESE-LIKE DOMAIN-CONTAINING PROTEIN 7-RELATED"/>
    <property type="match status" value="1"/>
</dbReference>
<dbReference type="PANTHER" id="PTHR43268">
    <property type="entry name" value="THIOSULFATE SULFURTRANSFERASE/RHODANESE-LIKE DOMAIN-CONTAINING PROTEIN 2"/>
    <property type="match status" value="1"/>
</dbReference>
<dbReference type="Pfam" id="PF00581">
    <property type="entry name" value="Rhodanese"/>
    <property type="match status" value="1"/>
</dbReference>
<dbReference type="Pfam" id="PF12368">
    <property type="entry name" value="Rhodanese_C"/>
    <property type="match status" value="1"/>
</dbReference>
<dbReference type="Pfam" id="PF17773">
    <property type="entry name" value="UPF0176_N"/>
    <property type="match status" value="1"/>
</dbReference>
<dbReference type="SMART" id="SM00450">
    <property type="entry name" value="RHOD"/>
    <property type="match status" value="1"/>
</dbReference>
<dbReference type="SUPFAM" id="SSF52821">
    <property type="entry name" value="Rhodanese/Cell cycle control phosphatase"/>
    <property type="match status" value="1"/>
</dbReference>
<dbReference type="PROSITE" id="PS50206">
    <property type="entry name" value="RHODANESE_3"/>
    <property type="match status" value="1"/>
</dbReference>
<keyword id="KW-0560">Oxidoreductase</keyword>
<keyword id="KW-0819">tRNA processing</keyword>
<organism>
    <name type="scientific">Chlamydia pneumoniae</name>
    <name type="common">Chlamydophila pneumoniae</name>
    <dbReference type="NCBI Taxonomy" id="83558"/>
    <lineage>
        <taxon>Bacteria</taxon>
        <taxon>Pseudomonadati</taxon>
        <taxon>Chlamydiota</taxon>
        <taxon>Chlamydiia</taxon>
        <taxon>Chlamydiales</taxon>
        <taxon>Chlamydiaceae</taxon>
        <taxon>Chlamydia/Chlamydophila group</taxon>
        <taxon>Chlamydia</taxon>
    </lineage>
</organism>
<reference key="1">
    <citation type="journal article" date="1999" name="Nat. Genet.">
        <title>Comparative genomes of Chlamydia pneumoniae and C. trachomatis.</title>
        <authorList>
            <person name="Kalman S."/>
            <person name="Mitchell W.P."/>
            <person name="Marathe R."/>
            <person name="Lammel C.J."/>
            <person name="Fan J."/>
            <person name="Hyman R.W."/>
            <person name="Olinger L."/>
            <person name="Grimwood J."/>
            <person name="Davis R.W."/>
            <person name="Stephens R.S."/>
        </authorList>
    </citation>
    <scope>NUCLEOTIDE SEQUENCE [LARGE SCALE GENOMIC DNA]</scope>
    <source>
        <strain>CWL029</strain>
    </source>
</reference>
<reference key="2">
    <citation type="journal article" date="2000" name="Nucleic Acids Res.">
        <title>Genome sequences of Chlamydia trachomatis MoPn and Chlamydia pneumoniae AR39.</title>
        <authorList>
            <person name="Read T.D."/>
            <person name="Brunham R.C."/>
            <person name="Shen C."/>
            <person name="Gill S.R."/>
            <person name="Heidelberg J.F."/>
            <person name="White O."/>
            <person name="Hickey E.K."/>
            <person name="Peterson J.D."/>
            <person name="Utterback T.R."/>
            <person name="Berry K.J."/>
            <person name="Bass S."/>
            <person name="Linher K.D."/>
            <person name="Weidman J.F."/>
            <person name="Khouri H.M."/>
            <person name="Craven B."/>
            <person name="Bowman C."/>
            <person name="Dodson R.J."/>
            <person name="Gwinn M.L."/>
            <person name="Nelson W.C."/>
            <person name="DeBoy R.T."/>
            <person name="Kolonay J.F."/>
            <person name="McClarty G."/>
            <person name="Salzberg S.L."/>
            <person name="Eisen J.A."/>
            <person name="Fraser C.M."/>
        </authorList>
    </citation>
    <scope>NUCLEOTIDE SEQUENCE [LARGE SCALE GENOMIC DNA]</scope>
    <source>
        <strain>AR39</strain>
    </source>
</reference>
<reference key="3">
    <citation type="journal article" date="2000" name="Nucleic Acids Res.">
        <title>Comparison of whole genome sequences of Chlamydia pneumoniae J138 from Japan and CWL029 from USA.</title>
        <authorList>
            <person name="Shirai M."/>
            <person name="Hirakawa H."/>
            <person name="Kimoto M."/>
            <person name="Tabuchi M."/>
            <person name="Kishi F."/>
            <person name="Ouchi K."/>
            <person name="Shiba T."/>
            <person name="Ishii K."/>
            <person name="Hattori M."/>
            <person name="Kuhara S."/>
            <person name="Nakazawa T."/>
        </authorList>
    </citation>
    <scope>NUCLEOTIDE SEQUENCE [LARGE SCALE GENOMIC DNA]</scope>
    <source>
        <strain>J138</strain>
    </source>
</reference>
<reference key="4">
    <citation type="submission" date="2002-05" db="EMBL/GenBank/DDBJ databases">
        <title>The genome sequence of Chlamydia pneumoniae TW183 and comparison with other Chlamydia strains based on whole genome sequence analysis.</title>
        <authorList>
            <person name="Geng M.M."/>
            <person name="Schuhmacher A."/>
            <person name="Muehldorfer I."/>
            <person name="Bensch K.W."/>
            <person name="Schaefer K.P."/>
            <person name="Schneider S."/>
            <person name="Pohl T."/>
            <person name="Essig A."/>
            <person name="Marre R."/>
            <person name="Melchers K."/>
        </authorList>
    </citation>
    <scope>NUCLEOTIDE SEQUENCE [LARGE SCALE GENOMIC DNA]</scope>
    <source>
        <strain>TW-183</strain>
    </source>
</reference>
<gene>
    <name evidence="1" type="primary">trhO</name>
    <name type="ordered locus">CPn_0734</name>
    <name type="ordered locus">CP_0012</name>
    <name type="ordered locus">CPj0734</name>
    <name type="ordered locus">CpB0762</name>
</gene>
<feature type="chain" id="PRO_0000161464" description="tRNA uridine(34) hydroxylase">
    <location>
        <begin position="1"/>
        <end position="324"/>
    </location>
</feature>
<feature type="domain" description="Rhodanese" evidence="1">
    <location>
        <begin position="122"/>
        <end position="218"/>
    </location>
</feature>
<feature type="active site" description="Cysteine persulfide intermediate" evidence="1">
    <location>
        <position position="178"/>
    </location>
</feature>
<comment type="function">
    <text evidence="1">Catalyzes oxygen-dependent 5-hydroxyuridine (ho5U) modification at position 34 in tRNAs.</text>
</comment>
<comment type="catalytic activity">
    <reaction evidence="1">
        <text>uridine(34) in tRNA + AH2 + O2 = 5-hydroxyuridine(34) in tRNA + A + H2O</text>
        <dbReference type="Rhea" id="RHEA:64224"/>
        <dbReference type="Rhea" id="RHEA-COMP:11727"/>
        <dbReference type="Rhea" id="RHEA-COMP:13381"/>
        <dbReference type="ChEBI" id="CHEBI:13193"/>
        <dbReference type="ChEBI" id="CHEBI:15377"/>
        <dbReference type="ChEBI" id="CHEBI:15379"/>
        <dbReference type="ChEBI" id="CHEBI:17499"/>
        <dbReference type="ChEBI" id="CHEBI:65315"/>
        <dbReference type="ChEBI" id="CHEBI:136877"/>
    </reaction>
</comment>
<comment type="similarity">
    <text evidence="1">Belongs to the TrhO family.</text>
</comment>